<organism>
    <name type="scientific">Staphylococcus saprophyticus subsp. saprophyticus (strain ATCC 15305 / DSM 20229 / NCIMB 8711 / NCTC 7292 / S-41)</name>
    <dbReference type="NCBI Taxonomy" id="342451"/>
    <lineage>
        <taxon>Bacteria</taxon>
        <taxon>Bacillati</taxon>
        <taxon>Bacillota</taxon>
        <taxon>Bacilli</taxon>
        <taxon>Bacillales</taxon>
        <taxon>Staphylococcaceae</taxon>
        <taxon>Staphylococcus</taxon>
    </lineage>
</organism>
<accession>Q49WV8</accession>
<sequence>MSSVKRLDINYKTDELFEDFRNFGNKDLYLVDELRGEMIDASSDSPFYGIYVGDCLGARMALYRKGEVEETHFPGFDDYNVIWKLEVLRDFQGRGYGTSLLDFAKDQGLPIKVIARNQSKDFFIKQGFTDLEETNRDGHDVLVWTP</sequence>
<protein>
    <recommendedName>
        <fullName>Uncharacterized N-acetyltransferase SSP1595</fullName>
        <ecNumber>2.3.1.-</ecNumber>
    </recommendedName>
</protein>
<reference key="1">
    <citation type="journal article" date="2005" name="Proc. Natl. Acad. Sci. U.S.A.">
        <title>Whole genome sequence of Staphylococcus saprophyticus reveals the pathogenesis of uncomplicated urinary tract infection.</title>
        <authorList>
            <person name="Kuroda M."/>
            <person name="Yamashita A."/>
            <person name="Hirakawa H."/>
            <person name="Kumano M."/>
            <person name="Morikawa K."/>
            <person name="Higashide M."/>
            <person name="Maruyama A."/>
            <person name="Inose Y."/>
            <person name="Matoba K."/>
            <person name="Toh H."/>
            <person name="Kuhara S."/>
            <person name="Hattori M."/>
            <person name="Ohta T."/>
        </authorList>
    </citation>
    <scope>NUCLEOTIDE SEQUENCE [LARGE SCALE GENOMIC DNA]</scope>
    <source>
        <strain>ATCC 15305 / DSM 20229 / NCIMB 8711 / NCTC 7292 / S-41</strain>
    </source>
</reference>
<proteinExistence type="inferred from homology"/>
<feature type="chain" id="PRO_0000232491" description="Uncharacterized N-acetyltransferase SSP1595">
    <location>
        <begin position="1"/>
        <end position="146"/>
    </location>
</feature>
<feature type="domain" description="N-acetyltransferase">
    <location>
        <begin position="7"/>
        <end position="146"/>
    </location>
</feature>
<gene>
    <name type="ordered locus">SSP1595</name>
</gene>
<name>Y1595_STAS1</name>
<dbReference type="EC" id="2.3.1.-"/>
<dbReference type="EMBL" id="AP008934">
    <property type="protein sequence ID" value="BAE18740.1"/>
    <property type="molecule type" value="Genomic_DNA"/>
</dbReference>
<dbReference type="RefSeq" id="WP_011303332.1">
    <property type="nucleotide sequence ID" value="NC_007350.1"/>
</dbReference>
<dbReference type="SMR" id="Q49WV8"/>
<dbReference type="GeneID" id="3615202"/>
<dbReference type="KEGG" id="ssp:SSP1595"/>
<dbReference type="PATRIC" id="fig|342451.11.peg.1597"/>
<dbReference type="eggNOG" id="COG0454">
    <property type="taxonomic scope" value="Bacteria"/>
</dbReference>
<dbReference type="HOGENOM" id="CLU_136634_0_0_9"/>
<dbReference type="OrthoDB" id="2242710at2"/>
<dbReference type="Proteomes" id="UP000006371">
    <property type="component" value="Chromosome"/>
</dbReference>
<dbReference type="GO" id="GO:0016747">
    <property type="term" value="F:acyltransferase activity, transferring groups other than amino-acyl groups"/>
    <property type="evidence" value="ECO:0007669"/>
    <property type="project" value="UniProtKB-UniRule"/>
</dbReference>
<dbReference type="CDD" id="cd04301">
    <property type="entry name" value="NAT_SF"/>
    <property type="match status" value="1"/>
</dbReference>
<dbReference type="Gene3D" id="3.40.630.30">
    <property type="match status" value="1"/>
</dbReference>
<dbReference type="HAMAP" id="MF_00824">
    <property type="entry name" value="Acetyltransf_YlbP"/>
    <property type="match status" value="1"/>
</dbReference>
<dbReference type="InterPro" id="IPR016181">
    <property type="entry name" value="Acyl_CoA_acyltransferase"/>
</dbReference>
<dbReference type="InterPro" id="IPR000182">
    <property type="entry name" value="GNAT_dom"/>
</dbReference>
<dbReference type="InterPro" id="IPR017274">
    <property type="entry name" value="YlbP"/>
</dbReference>
<dbReference type="NCBIfam" id="NF010241">
    <property type="entry name" value="PRK13688.1"/>
    <property type="match status" value="1"/>
</dbReference>
<dbReference type="Pfam" id="PF13508">
    <property type="entry name" value="Acetyltransf_7"/>
    <property type="match status" value="1"/>
</dbReference>
<dbReference type="PIRSF" id="PIRSF037732">
    <property type="entry name" value="YlbP_prd"/>
    <property type="match status" value="1"/>
</dbReference>
<dbReference type="SUPFAM" id="SSF55729">
    <property type="entry name" value="Acyl-CoA N-acyltransferases (Nat)"/>
    <property type="match status" value="1"/>
</dbReference>
<dbReference type="PROSITE" id="PS51186">
    <property type="entry name" value="GNAT"/>
    <property type="match status" value="1"/>
</dbReference>
<keyword id="KW-0012">Acyltransferase</keyword>
<keyword id="KW-1185">Reference proteome</keyword>
<keyword id="KW-0808">Transferase</keyword>